<feature type="chain" id="PRO_0000403008" description="FMN reductase (NADH) RutF">
    <location>
        <begin position="1"/>
        <end position="164"/>
    </location>
</feature>
<dbReference type="EC" id="1.5.1.42" evidence="1"/>
<dbReference type="EMBL" id="AP010958">
    <property type="protein sequence ID" value="BAI29898.1"/>
    <property type="molecule type" value="Genomic_DNA"/>
</dbReference>
<dbReference type="RefSeq" id="WP_001028095.1">
    <property type="nucleotide sequence ID" value="NC_013353.1"/>
</dbReference>
<dbReference type="SMR" id="C8U5G9"/>
<dbReference type="GeneID" id="75171083"/>
<dbReference type="KEGG" id="eoh:ECO103_1053"/>
<dbReference type="HOGENOM" id="CLU_059021_2_2_6"/>
<dbReference type="GO" id="GO:0010181">
    <property type="term" value="F:FMN binding"/>
    <property type="evidence" value="ECO:0007669"/>
    <property type="project" value="InterPro"/>
</dbReference>
<dbReference type="GO" id="GO:0052874">
    <property type="term" value="F:FMN reductase (NADH) activity"/>
    <property type="evidence" value="ECO:0007669"/>
    <property type="project" value="UniProtKB-EC"/>
</dbReference>
<dbReference type="GO" id="GO:0008752">
    <property type="term" value="F:FMN reductase [NAD(P)H] activity"/>
    <property type="evidence" value="ECO:0007669"/>
    <property type="project" value="InterPro"/>
</dbReference>
<dbReference type="GO" id="GO:0042602">
    <property type="term" value="F:riboflavin reductase (NADPH) activity"/>
    <property type="evidence" value="ECO:0007669"/>
    <property type="project" value="UniProtKB-UniRule"/>
</dbReference>
<dbReference type="GO" id="GO:0019740">
    <property type="term" value="P:nitrogen utilization"/>
    <property type="evidence" value="ECO:0007669"/>
    <property type="project" value="UniProtKB-UniRule"/>
</dbReference>
<dbReference type="GO" id="GO:0006212">
    <property type="term" value="P:uracil catabolic process"/>
    <property type="evidence" value="ECO:0007669"/>
    <property type="project" value="UniProtKB-UniRule"/>
</dbReference>
<dbReference type="FunFam" id="2.30.110.10:FF:000002">
    <property type="entry name" value="FMN reductase (NADH) RutF"/>
    <property type="match status" value="1"/>
</dbReference>
<dbReference type="Gene3D" id="2.30.110.10">
    <property type="entry name" value="Electron Transport, Fmn-binding Protein, Chain A"/>
    <property type="match status" value="1"/>
</dbReference>
<dbReference type="HAMAP" id="MF_00833">
    <property type="entry name" value="RutF"/>
    <property type="match status" value="1"/>
</dbReference>
<dbReference type="InterPro" id="IPR002563">
    <property type="entry name" value="Flavin_Rdtase-like_dom"/>
</dbReference>
<dbReference type="InterPro" id="IPR050268">
    <property type="entry name" value="NADH-dep_flavin_reductase"/>
</dbReference>
<dbReference type="InterPro" id="IPR019917">
    <property type="entry name" value="RutF"/>
</dbReference>
<dbReference type="InterPro" id="IPR012349">
    <property type="entry name" value="Split_barrel_FMN-bd"/>
</dbReference>
<dbReference type="NCBIfam" id="TIGR03615">
    <property type="entry name" value="RutF"/>
    <property type="match status" value="1"/>
</dbReference>
<dbReference type="PANTHER" id="PTHR30466">
    <property type="entry name" value="FLAVIN REDUCTASE"/>
    <property type="match status" value="1"/>
</dbReference>
<dbReference type="PANTHER" id="PTHR30466:SF1">
    <property type="entry name" value="FMN REDUCTASE (NADH) RUTF"/>
    <property type="match status" value="1"/>
</dbReference>
<dbReference type="Pfam" id="PF01613">
    <property type="entry name" value="Flavin_Reduct"/>
    <property type="match status" value="1"/>
</dbReference>
<dbReference type="SMART" id="SM00903">
    <property type="entry name" value="Flavin_Reduct"/>
    <property type="match status" value="1"/>
</dbReference>
<dbReference type="SUPFAM" id="SSF50475">
    <property type="entry name" value="FMN-binding split barrel"/>
    <property type="match status" value="1"/>
</dbReference>
<evidence type="ECO:0000255" key="1">
    <source>
        <dbReference type="HAMAP-Rule" id="MF_00833"/>
    </source>
</evidence>
<name>RUTF_ECO10</name>
<accession>C8U5G9</accession>
<protein>
    <recommendedName>
        <fullName evidence="1">FMN reductase (NADH) RutF</fullName>
        <ecNumber evidence="1">1.5.1.42</ecNumber>
    </recommendedName>
    <alternativeName>
        <fullName evidence="1">FMN reductase</fullName>
    </alternativeName>
    <alternativeName>
        <fullName evidence="1">NADH-flavin reductase RutF</fullName>
    </alternativeName>
    <alternativeName>
        <fullName evidence="1">NADH:flavin oxidoreductase</fullName>
    </alternativeName>
</protein>
<sequence length="164" mass="17747">MNIVDQQTFRDAMSCMGAAVNIITTDGPAGRAGFTASAVCSVTDTPPTLLVCLNRGASVWPVFNENRTLCVNTLSAGQEPLSNLFGGKTPMEHRFAAARWQTGVTGCPQLEEALVSFDCRISQVVSVGTHDILFCAIEAIHRHATPYGLVWFDRSYHALMRPAC</sequence>
<reference key="1">
    <citation type="journal article" date="2009" name="Proc. Natl. Acad. Sci. U.S.A.">
        <title>Comparative genomics reveal the mechanism of the parallel evolution of O157 and non-O157 enterohemorrhagic Escherichia coli.</title>
        <authorList>
            <person name="Ogura Y."/>
            <person name="Ooka T."/>
            <person name="Iguchi A."/>
            <person name="Toh H."/>
            <person name="Asadulghani M."/>
            <person name="Oshima K."/>
            <person name="Kodama T."/>
            <person name="Abe H."/>
            <person name="Nakayama K."/>
            <person name="Kurokawa K."/>
            <person name="Tobe T."/>
            <person name="Hattori M."/>
            <person name="Hayashi T."/>
        </authorList>
    </citation>
    <scope>NUCLEOTIDE SEQUENCE [LARGE SCALE GENOMIC DNA]</scope>
    <source>
        <strain>12009 / EHEC</strain>
    </source>
</reference>
<keyword id="KW-0285">Flavoprotein</keyword>
<keyword id="KW-0288">FMN</keyword>
<keyword id="KW-0520">NAD</keyword>
<keyword id="KW-0560">Oxidoreductase</keyword>
<comment type="function">
    <text evidence="1">Catalyzes the reduction of FMN to FMNH2 which is used to reduce pyrimidine by RutA via the Rut pathway.</text>
</comment>
<comment type="catalytic activity">
    <reaction evidence="1">
        <text>FMNH2 + NAD(+) = FMN + NADH + 2 H(+)</text>
        <dbReference type="Rhea" id="RHEA:21620"/>
        <dbReference type="ChEBI" id="CHEBI:15378"/>
        <dbReference type="ChEBI" id="CHEBI:57540"/>
        <dbReference type="ChEBI" id="CHEBI:57618"/>
        <dbReference type="ChEBI" id="CHEBI:57945"/>
        <dbReference type="ChEBI" id="CHEBI:58210"/>
        <dbReference type="EC" id="1.5.1.42"/>
    </reaction>
</comment>
<comment type="induction">
    <text evidence="1">Up-regulated by the nitrogen regulatory protein C (NtrC also called GlnG) and repressed by RutR.</text>
</comment>
<comment type="similarity">
    <text evidence="1">Belongs to the non-flavoprotein flavin reductase family. RutF subfamily.</text>
</comment>
<organism>
    <name type="scientific">Escherichia coli O103:H2 (strain 12009 / EHEC)</name>
    <dbReference type="NCBI Taxonomy" id="585395"/>
    <lineage>
        <taxon>Bacteria</taxon>
        <taxon>Pseudomonadati</taxon>
        <taxon>Pseudomonadota</taxon>
        <taxon>Gammaproteobacteria</taxon>
        <taxon>Enterobacterales</taxon>
        <taxon>Enterobacteriaceae</taxon>
        <taxon>Escherichia</taxon>
    </lineage>
</organism>
<gene>
    <name evidence="1" type="primary">rutF</name>
    <name type="ordered locus">ECO103_1053</name>
</gene>
<proteinExistence type="inferred from homology"/>